<protein>
    <recommendedName>
        <fullName evidence="1">Bifunctional protein FolD</fullName>
    </recommendedName>
    <domain>
        <recommendedName>
            <fullName evidence="1">Methylenetetrahydrofolate dehydrogenase</fullName>
            <ecNumber evidence="1">1.5.1.5</ecNumber>
        </recommendedName>
    </domain>
    <domain>
        <recommendedName>
            <fullName evidence="1">Methenyltetrahydrofolate cyclohydrolase</fullName>
            <ecNumber evidence="1">3.5.4.9</ecNumber>
        </recommendedName>
    </domain>
</protein>
<dbReference type="EC" id="1.5.1.5" evidence="1"/>
<dbReference type="EC" id="3.5.4.9" evidence="1"/>
<dbReference type="EMBL" id="AM236080">
    <property type="protein sequence ID" value="CAK06237.1"/>
    <property type="molecule type" value="Genomic_DNA"/>
</dbReference>
<dbReference type="RefSeq" id="WP_011650497.1">
    <property type="nucleotide sequence ID" value="NC_008380.1"/>
</dbReference>
<dbReference type="SMR" id="Q1MLB6"/>
<dbReference type="EnsemblBacteria" id="CAK06237">
    <property type="protein sequence ID" value="CAK06237"/>
    <property type="gene ID" value="RL0743"/>
</dbReference>
<dbReference type="KEGG" id="rle:RL0743"/>
<dbReference type="eggNOG" id="COG0190">
    <property type="taxonomic scope" value="Bacteria"/>
</dbReference>
<dbReference type="HOGENOM" id="CLU_034045_1_2_5"/>
<dbReference type="UniPathway" id="UPA00193"/>
<dbReference type="Proteomes" id="UP000006575">
    <property type="component" value="Chromosome"/>
</dbReference>
<dbReference type="GO" id="GO:0005829">
    <property type="term" value="C:cytosol"/>
    <property type="evidence" value="ECO:0007669"/>
    <property type="project" value="TreeGrafter"/>
</dbReference>
<dbReference type="GO" id="GO:0004477">
    <property type="term" value="F:methenyltetrahydrofolate cyclohydrolase activity"/>
    <property type="evidence" value="ECO:0007669"/>
    <property type="project" value="UniProtKB-UniRule"/>
</dbReference>
<dbReference type="GO" id="GO:0004488">
    <property type="term" value="F:methylenetetrahydrofolate dehydrogenase (NADP+) activity"/>
    <property type="evidence" value="ECO:0007669"/>
    <property type="project" value="UniProtKB-UniRule"/>
</dbReference>
<dbReference type="GO" id="GO:0000105">
    <property type="term" value="P:L-histidine biosynthetic process"/>
    <property type="evidence" value="ECO:0007669"/>
    <property type="project" value="UniProtKB-KW"/>
</dbReference>
<dbReference type="GO" id="GO:0009086">
    <property type="term" value="P:methionine biosynthetic process"/>
    <property type="evidence" value="ECO:0007669"/>
    <property type="project" value="UniProtKB-KW"/>
</dbReference>
<dbReference type="GO" id="GO:0006164">
    <property type="term" value="P:purine nucleotide biosynthetic process"/>
    <property type="evidence" value="ECO:0007669"/>
    <property type="project" value="UniProtKB-KW"/>
</dbReference>
<dbReference type="GO" id="GO:0035999">
    <property type="term" value="P:tetrahydrofolate interconversion"/>
    <property type="evidence" value="ECO:0007669"/>
    <property type="project" value="UniProtKB-UniRule"/>
</dbReference>
<dbReference type="CDD" id="cd01080">
    <property type="entry name" value="NAD_bind_m-THF_DH_Cyclohyd"/>
    <property type="match status" value="1"/>
</dbReference>
<dbReference type="FunFam" id="3.40.50.720:FF:000006">
    <property type="entry name" value="Bifunctional protein FolD"/>
    <property type="match status" value="1"/>
</dbReference>
<dbReference type="FunFam" id="3.40.50.10860:FF:000005">
    <property type="entry name" value="C-1-tetrahydrofolate synthase, cytoplasmic, putative"/>
    <property type="match status" value="1"/>
</dbReference>
<dbReference type="Gene3D" id="3.40.50.10860">
    <property type="entry name" value="Leucine Dehydrogenase, chain A, domain 1"/>
    <property type="match status" value="1"/>
</dbReference>
<dbReference type="Gene3D" id="3.40.50.720">
    <property type="entry name" value="NAD(P)-binding Rossmann-like Domain"/>
    <property type="match status" value="1"/>
</dbReference>
<dbReference type="HAMAP" id="MF_01576">
    <property type="entry name" value="THF_DHG_CYH"/>
    <property type="match status" value="1"/>
</dbReference>
<dbReference type="InterPro" id="IPR046346">
    <property type="entry name" value="Aminoacid_DH-like_N_sf"/>
</dbReference>
<dbReference type="InterPro" id="IPR036291">
    <property type="entry name" value="NAD(P)-bd_dom_sf"/>
</dbReference>
<dbReference type="InterPro" id="IPR000672">
    <property type="entry name" value="THF_DH/CycHdrlase"/>
</dbReference>
<dbReference type="InterPro" id="IPR020630">
    <property type="entry name" value="THF_DH/CycHdrlase_cat_dom"/>
</dbReference>
<dbReference type="InterPro" id="IPR020867">
    <property type="entry name" value="THF_DH/CycHdrlase_CS"/>
</dbReference>
<dbReference type="InterPro" id="IPR020631">
    <property type="entry name" value="THF_DH/CycHdrlase_NAD-bd_dom"/>
</dbReference>
<dbReference type="NCBIfam" id="NF010783">
    <property type="entry name" value="PRK14186.1"/>
    <property type="match status" value="1"/>
</dbReference>
<dbReference type="NCBIfam" id="NF010785">
    <property type="entry name" value="PRK14188.1"/>
    <property type="match status" value="1"/>
</dbReference>
<dbReference type="PANTHER" id="PTHR48099:SF5">
    <property type="entry name" value="C-1-TETRAHYDROFOLATE SYNTHASE, CYTOPLASMIC"/>
    <property type="match status" value="1"/>
</dbReference>
<dbReference type="PANTHER" id="PTHR48099">
    <property type="entry name" value="C-1-TETRAHYDROFOLATE SYNTHASE, CYTOPLASMIC-RELATED"/>
    <property type="match status" value="1"/>
</dbReference>
<dbReference type="Pfam" id="PF00763">
    <property type="entry name" value="THF_DHG_CYH"/>
    <property type="match status" value="1"/>
</dbReference>
<dbReference type="Pfam" id="PF02882">
    <property type="entry name" value="THF_DHG_CYH_C"/>
    <property type="match status" value="1"/>
</dbReference>
<dbReference type="PRINTS" id="PR00085">
    <property type="entry name" value="THFDHDRGNASE"/>
</dbReference>
<dbReference type="SUPFAM" id="SSF53223">
    <property type="entry name" value="Aminoacid dehydrogenase-like, N-terminal domain"/>
    <property type="match status" value="1"/>
</dbReference>
<dbReference type="SUPFAM" id="SSF51735">
    <property type="entry name" value="NAD(P)-binding Rossmann-fold domains"/>
    <property type="match status" value="1"/>
</dbReference>
<dbReference type="PROSITE" id="PS00767">
    <property type="entry name" value="THF_DHG_CYH_2"/>
    <property type="match status" value="1"/>
</dbReference>
<evidence type="ECO:0000255" key="1">
    <source>
        <dbReference type="HAMAP-Rule" id="MF_01576"/>
    </source>
</evidence>
<gene>
    <name evidence="1" type="primary">folD</name>
    <name type="ordered locus">RL0743</name>
</gene>
<feature type="chain" id="PRO_0000268462" description="Bifunctional protein FolD">
    <location>
        <begin position="1"/>
        <end position="299"/>
    </location>
</feature>
<feature type="binding site" evidence="1">
    <location>
        <begin position="168"/>
        <end position="170"/>
    </location>
    <ligand>
        <name>NADP(+)</name>
        <dbReference type="ChEBI" id="CHEBI:58349"/>
    </ligand>
</feature>
<feature type="binding site" evidence="1">
    <location>
        <position position="193"/>
    </location>
    <ligand>
        <name>NADP(+)</name>
        <dbReference type="ChEBI" id="CHEBI:58349"/>
    </ligand>
</feature>
<feature type="binding site" evidence="1">
    <location>
        <position position="234"/>
    </location>
    <ligand>
        <name>NADP(+)</name>
        <dbReference type="ChEBI" id="CHEBI:58349"/>
    </ligand>
</feature>
<comment type="function">
    <text evidence="1">Catalyzes the oxidation of 5,10-methylenetetrahydrofolate to 5,10-methenyltetrahydrofolate and then the hydrolysis of 5,10-methenyltetrahydrofolate to 10-formyltetrahydrofolate.</text>
</comment>
<comment type="catalytic activity">
    <reaction evidence="1">
        <text>(6R)-5,10-methylene-5,6,7,8-tetrahydrofolate + NADP(+) = (6R)-5,10-methenyltetrahydrofolate + NADPH</text>
        <dbReference type="Rhea" id="RHEA:22812"/>
        <dbReference type="ChEBI" id="CHEBI:15636"/>
        <dbReference type="ChEBI" id="CHEBI:57455"/>
        <dbReference type="ChEBI" id="CHEBI:57783"/>
        <dbReference type="ChEBI" id="CHEBI:58349"/>
        <dbReference type="EC" id="1.5.1.5"/>
    </reaction>
</comment>
<comment type="catalytic activity">
    <reaction evidence="1">
        <text>(6R)-5,10-methenyltetrahydrofolate + H2O = (6R)-10-formyltetrahydrofolate + H(+)</text>
        <dbReference type="Rhea" id="RHEA:23700"/>
        <dbReference type="ChEBI" id="CHEBI:15377"/>
        <dbReference type="ChEBI" id="CHEBI:15378"/>
        <dbReference type="ChEBI" id="CHEBI:57455"/>
        <dbReference type="ChEBI" id="CHEBI:195366"/>
        <dbReference type="EC" id="3.5.4.9"/>
    </reaction>
</comment>
<comment type="pathway">
    <text evidence="1">One-carbon metabolism; tetrahydrofolate interconversion.</text>
</comment>
<comment type="subunit">
    <text evidence="1">Homodimer.</text>
</comment>
<comment type="similarity">
    <text evidence="1">Belongs to the tetrahydrofolate dehydrogenase/cyclohydrolase family.</text>
</comment>
<proteinExistence type="inferred from homology"/>
<accession>Q1MLB6</accession>
<keyword id="KW-0028">Amino-acid biosynthesis</keyword>
<keyword id="KW-0368">Histidine biosynthesis</keyword>
<keyword id="KW-0378">Hydrolase</keyword>
<keyword id="KW-0486">Methionine biosynthesis</keyword>
<keyword id="KW-0511">Multifunctional enzyme</keyword>
<keyword id="KW-0521">NADP</keyword>
<keyword id="KW-0554">One-carbon metabolism</keyword>
<keyword id="KW-0560">Oxidoreductase</keyword>
<keyword id="KW-0658">Purine biosynthesis</keyword>
<organism>
    <name type="scientific">Rhizobium johnstonii (strain DSM 114642 / LMG 32736 / 3841)</name>
    <name type="common">Rhizobium leguminosarum bv. viciae</name>
    <dbReference type="NCBI Taxonomy" id="216596"/>
    <lineage>
        <taxon>Bacteria</taxon>
        <taxon>Pseudomonadati</taxon>
        <taxon>Pseudomonadota</taxon>
        <taxon>Alphaproteobacteria</taxon>
        <taxon>Hyphomicrobiales</taxon>
        <taxon>Rhizobiaceae</taxon>
        <taxon>Rhizobium/Agrobacterium group</taxon>
        <taxon>Rhizobium</taxon>
        <taxon>Rhizobium johnstonii</taxon>
    </lineage>
</organism>
<reference key="1">
    <citation type="journal article" date="2006" name="Genome Biol.">
        <title>The genome of Rhizobium leguminosarum has recognizable core and accessory components.</title>
        <authorList>
            <person name="Young J.P.W."/>
            <person name="Crossman L.C."/>
            <person name="Johnston A.W.B."/>
            <person name="Thomson N.R."/>
            <person name="Ghazoui Z.F."/>
            <person name="Hull K.H."/>
            <person name="Wexler M."/>
            <person name="Curson A.R.J."/>
            <person name="Todd J.D."/>
            <person name="Poole P.S."/>
            <person name="Mauchline T.H."/>
            <person name="East A.K."/>
            <person name="Quail M.A."/>
            <person name="Churcher C."/>
            <person name="Arrowsmith C."/>
            <person name="Cherevach I."/>
            <person name="Chillingworth T."/>
            <person name="Clarke K."/>
            <person name="Cronin A."/>
            <person name="Davis P."/>
            <person name="Fraser A."/>
            <person name="Hance Z."/>
            <person name="Hauser H."/>
            <person name="Jagels K."/>
            <person name="Moule S."/>
            <person name="Mungall K."/>
            <person name="Norbertczak H."/>
            <person name="Rabbinowitsch E."/>
            <person name="Sanders M."/>
            <person name="Simmonds M."/>
            <person name="Whitehead S."/>
            <person name="Parkhill J."/>
        </authorList>
    </citation>
    <scope>NUCLEOTIDE SEQUENCE [LARGE SCALE GENOMIC DNA]</scope>
    <source>
        <strain>DSM 114642 / LMG 32736 / 3841</strain>
    </source>
</reference>
<sequence length="299" mass="30702">MTTVIDGKNVAASVIQTVKSATAALEKSSGVTTGLAVVIVGDDPASHAYVGSKGRMAKECGFKSVQHTLPADTKQEDLAALVAALNADPSIHGILVQLPLPKPLDSEAIIQSILPEKDVDGLSVVNAGKLATGDLKTGLVSCTPAGAMVFVRRTHGEDLSGLNAVVIGRSNLFGKPMAQLLLNANATVTIAHSRTKNLAEVCRNADILVAAVGRPEMVRADWVKPGATVIDVGINRVAAPETGEGKTRLVGDVAFEEVSAVASTITPVPGGVGPMTIAMLMANTVIAAHRTAGQTPPQF</sequence>
<name>FOLD_RHIJ3</name>